<accession>A8YY15</accession>
<sequence length="114" mass="13310">MAVNLYDYANQLEQALRESEEYKAIKEAFANVKANEESKKLFDEFRETQINFQQKQMQGEEIAEEDLQKAQEQAQAIEKDENISALMNAEQKMSQVFQEINQIIVKPLDEIYAD</sequence>
<organism>
    <name type="scientific">Staphylococcus aureus (strain USA300 / TCH1516)</name>
    <dbReference type="NCBI Taxonomy" id="451516"/>
    <lineage>
        <taxon>Bacteria</taxon>
        <taxon>Bacillati</taxon>
        <taxon>Bacillota</taxon>
        <taxon>Bacilli</taxon>
        <taxon>Bacillales</taxon>
        <taxon>Staphylococcaceae</taxon>
        <taxon>Staphylococcus</taxon>
    </lineage>
</organism>
<dbReference type="EMBL" id="CP000730">
    <property type="protein sequence ID" value="ABX29841.1"/>
    <property type="molecule type" value="Genomic_DNA"/>
</dbReference>
<dbReference type="RefSeq" id="WP_000290301.1">
    <property type="nucleotide sequence ID" value="NC_010079.1"/>
</dbReference>
<dbReference type="SMR" id="A8YY15"/>
<dbReference type="KEGG" id="sax:USA300HOU_1838"/>
<dbReference type="HOGENOM" id="CLU_140243_3_0_9"/>
<dbReference type="BioCyc" id="SAUR451516-HMP:GTV5-1870-MONOMER"/>
<dbReference type="Gene3D" id="1.20.1500.10">
    <property type="entry name" value="YheA/YmcA-like"/>
    <property type="match status" value="1"/>
</dbReference>
<dbReference type="HAMAP" id="MF_01526">
    <property type="entry name" value="UPF0342"/>
    <property type="match status" value="1"/>
</dbReference>
<dbReference type="InterPro" id="IPR010368">
    <property type="entry name" value="Com_YlbF"/>
</dbReference>
<dbReference type="InterPro" id="IPR023378">
    <property type="entry name" value="YheA/YmcA-like_dom_sf"/>
</dbReference>
<dbReference type="NCBIfam" id="NF010212">
    <property type="entry name" value="PRK13676.1-5"/>
    <property type="match status" value="1"/>
</dbReference>
<dbReference type="Pfam" id="PF06133">
    <property type="entry name" value="Com_YlbF"/>
    <property type="match status" value="1"/>
</dbReference>
<dbReference type="SUPFAM" id="SSF158622">
    <property type="entry name" value="YheA/YmcA-like"/>
    <property type="match status" value="1"/>
</dbReference>
<reference key="1">
    <citation type="journal article" date="2007" name="BMC Microbiol.">
        <title>Subtle genetic changes enhance virulence of methicillin resistant and sensitive Staphylococcus aureus.</title>
        <authorList>
            <person name="Highlander S.K."/>
            <person name="Hulten K.G."/>
            <person name="Qin X."/>
            <person name="Jiang H."/>
            <person name="Yerrapragada S."/>
            <person name="Mason E.O. Jr."/>
            <person name="Shang Y."/>
            <person name="Williams T.M."/>
            <person name="Fortunov R.M."/>
            <person name="Liu Y."/>
            <person name="Igboeli O."/>
            <person name="Petrosino J."/>
            <person name="Tirumalai M."/>
            <person name="Uzman A."/>
            <person name="Fox G.E."/>
            <person name="Cardenas A.M."/>
            <person name="Muzny D.M."/>
            <person name="Hemphill L."/>
            <person name="Ding Y."/>
            <person name="Dugan S."/>
            <person name="Blyth P.R."/>
            <person name="Buhay C.J."/>
            <person name="Dinh H.H."/>
            <person name="Hawes A.C."/>
            <person name="Holder M."/>
            <person name="Kovar C.L."/>
            <person name="Lee S.L."/>
            <person name="Liu W."/>
            <person name="Nazareth L.V."/>
            <person name="Wang Q."/>
            <person name="Zhou J."/>
            <person name="Kaplan S.L."/>
            <person name="Weinstock G.M."/>
        </authorList>
    </citation>
    <scope>NUCLEOTIDE SEQUENCE [LARGE SCALE GENOMIC DNA]</scope>
    <source>
        <strain>USA300 / TCH1516</strain>
    </source>
</reference>
<gene>
    <name type="ordered locus">USA300HOU_1838</name>
</gene>
<name>Y1838_STAAT</name>
<evidence type="ECO:0000255" key="1">
    <source>
        <dbReference type="HAMAP-Rule" id="MF_01526"/>
    </source>
</evidence>
<comment type="similarity">
    <text evidence="1">Belongs to the UPF0342 family.</text>
</comment>
<protein>
    <recommendedName>
        <fullName evidence="1">UPF0342 protein USA300HOU_1838</fullName>
    </recommendedName>
</protein>
<proteinExistence type="inferred from homology"/>
<feature type="chain" id="PRO_1000087578" description="UPF0342 protein USA300HOU_1838">
    <location>
        <begin position="1"/>
        <end position="114"/>
    </location>
</feature>